<proteinExistence type="inferred from homology"/>
<comment type="PTM">
    <text evidence="1">The N-terminus is cleaved by ribosomal processing cysteine protease Prp.</text>
</comment>
<comment type="similarity">
    <text evidence="2">Belongs to the bacterial ribosomal protein bL27 family.</text>
</comment>
<name>RL27_LACPL</name>
<accession>Q88WN3</accession>
<accession>F9UNW9</accession>
<reference key="1">
    <citation type="journal article" date="2003" name="Proc. Natl. Acad. Sci. U.S.A.">
        <title>Complete genome sequence of Lactobacillus plantarum WCFS1.</title>
        <authorList>
            <person name="Kleerebezem M."/>
            <person name="Boekhorst J."/>
            <person name="van Kranenburg R."/>
            <person name="Molenaar D."/>
            <person name="Kuipers O.P."/>
            <person name="Leer R."/>
            <person name="Tarchini R."/>
            <person name="Peters S.A."/>
            <person name="Sandbrink H.M."/>
            <person name="Fiers M.W.E.J."/>
            <person name="Stiekema W."/>
            <person name="Klein Lankhorst R.M."/>
            <person name="Bron P.A."/>
            <person name="Hoffer S.M."/>
            <person name="Nierop Groot M.N."/>
            <person name="Kerkhoven R."/>
            <person name="De Vries M."/>
            <person name="Ursing B."/>
            <person name="De Vos W.M."/>
            <person name="Siezen R.J."/>
        </authorList>
    </citation>
    <scope>NUCLEOTIDE SEQUENCE [LARGE SCALE GENOMIC DNA]</scope>
    <source>
        <strain>ATCC BAA-793 / NCIMB 8826 / WCFS1</strain>
    </source>
</reference>
<reference key="2">
    <citation type="journal article" date="2012" name="J. Bacteriol.">
        <title>Complete resequencing and reannotation of the Lactobacillus plantarum WCFS1 genome.</title>
        <authorList>
            <person name="Siezen R.J."/>
            <person name="Francke C."/>
            <person name="Renckens B."/>
            <person name="Boekhorst J."/>
            <person name="Wels M."/>
            <person name="Kleerebezem M."/>
            <person name="van Hijum S.A."/>
        </authorList>
    </citation>
    <scope>NUCLEOTIDE SEQUENCE [LARGE SCALE GENOMIC DNA]</scope>
    <scope>GENOME REANNOTATION</scope>
    <source>
        <strain>ATCC BAA-793 / NCIMB 8826 / WCFS1</strain>
    </source>
</reference>
<keyword id="KW-1185">Reference proteome</keyword>
<keyword id="KW-0687">Ribonucleoprotein</keyword>
<keyword id="KW-0689">Ribosomal protein</keyword>
<protein>
    <recommendedName>
        <fullName evidence="2">Large ribosomal subunit protein bL27</fullName>
    </recommendedName>
    <alternativeName>
        <fullName evidence="4">50S ribosomal protein L27</fullName>
    </alternativeName>
</protein>
<evidence type="ECO:0000250" key="1">
    <source>
        <dbReference type="UniProtKB" id="Q2FXT0"/>
    </source>
</evidence>
<evidence type="ECO:0000255" key="2">
    <source>
        <dbReference type="HAMAP-Rule" id="MF_00539"/>
    </source>
</evidence>
<evidence type="ECO:0000256" key="3">
    <source>
        <dbReference type="SAM" id="MobiDB-lite"/>
    </source>
</evidence>
<evidence type="ECO:0000305" key="4"/>
<dbReference type="EMBL" id="AL935263">
    <property type="protein sequence ID" value="CCC78908.1"/>
    <property type="molecule type" value="Genomic_DNA"/>
</dbReference>
<dbReference type="RefSeq" id="WP_003638594.1">
    <property type="nucleotide sequence ID" value="NC_004567.2"/>
</dbReference>
<dbReference type="RefSeq" id="YP_004889422.1">
    <property type="nucleotide sequence ID" value="NC_004567.2"/>
</dbReference>
<dbReference type="SMR" id="Q88WN3"/>
<dbReference type="STRING" id="220668.lp_1594"/>
<dbReference type="EnsemblBacteria" id="CCC78908">
    <property type="protein sequence ID" value="CCC78908"/>
    <property type="gene ID" value="lp_1594"/>
</dbReference>
<dbReference type="GeneID" id="89668977"/>
<dbReference type="KEGG" id="lpl:lp_1594"/>
<dbReference type="PATRIC" id="fig|220668.9.peg.1343"/>
<dbReference type="eggNOG" id="COG0211">
    <property type="taxonomic scope" value="Bacteria"/>
</dbReference>
<dbReference type="HOGENOM" id="CLU_095424_4_0_9"/>
<dbReference type="OrthoDB" id="9803474at2"/>
<dbReference type="PhylomeDB" id="Q88WN3"/>
<dbReference type="Proteomes" id="UP000000432">
    <property type="component" value="Chromosome"/>
</dbReference>
<dbReference type="GO" id="GO:0022625">
    <property type="term" value="C:cytosolic large ribosomal subunit"/>
    <property type="evidence" value="ECO:0007669"/>
    <property type="project" value="TreeGrafter"/>
</dbReference>
<dbReference type="GO" id="GO:0003735">
    <property type="term" value="F:structural constituent of ribosome"/>
    <property type="evidence" value="ECO:0007669"/>
    <property type="project" value="InterPro"/>
</dbReference>
<dbReference type="GO" id="GO:0006412">
    <property type="term" value="P:translation"/>
    <property type="evidence" value="ECO:0007669"/>
    <property type="project" value="UniProtKB-UniRule"/>
</dbReference>
<dbReference type="FunFam" id="2.40.50.100:FF:000004">
    <property type="entry name" value="50S ribosomal protein L27"/>
    <property type="match status" value="1"/>
</dbReference>
<dbReference type="Gene3D" id="2.40.50.100">
    <property type="match status" value="1"/>
</dbReference>
<dbReference type="HAMAP" id="MF_00539">
    <property type="entry name" value="Ribosomal_bL27"/>
    <property type="match status" value="1"/>
</dbReference>
<dbReference type="InterPro" id="IPR001684">
    <property type="entry name" value="Ribosomal_bL27"/>
</dbReference>
<dbReference type="InterPro" id="IPR018261">
    <property type="entry name" value="Ribosomal_bL27_CS"/>
</dbReference>
<dbReference type="NCBIfam" id="TIGR00062">
    <property type="entry name" value="L27"/>
    <property type="match status" value="1"/>
</dbReference>
<dbReference type="PANTHER" id="PTHR15893:SF0">
    <property type="entry name" value="LARGE RIBOSOMAL SUBUNIT PROTEIN BL27M"/>
    <property type="match status" value="1"/>
</dbReference>
<dbReference type="PANTHER" id="PTHR15893">
    <property type="entry name" value="RIBOSOMAL PROTEIN L27"/>
    <property type="match status" value="1"/>
</dbReference>
<dbReference type="Pfam" id="PF01016">
    <property type="entry name" value="Ribosomal_L27"/>
    <property type="match status" value="1"/>
</dbReference>
<dbReference type="PRINTS" id="PR00063">
    <property type="entry name" value="RIBOSOMALL27"/>
</dbReference>
<dbReference type="SUPFAM" id="SSF110324">
    <property type="entry name" value="Ribosomal L27 protein-like"/>
    <property type="match status" value="1"/>
</dbReference>
<dbReference type="PROSITE" id="PS00831">
    <property type="entry name" value="RIBOSOMAL_L27"/>
    <property type="match status" value="1"/>
</dbReference>
<organism>
    <name type="scientific">Lactiplantibacillus plantarum (strain ATCC BAA-793 / NCIMB 8826 / WCFS1)</name>
    <name type="common">Lactobacillus plantarum</name>
    <dbReference type="NCBI Taxonomy" id="220668"/>
    <lineage>
        <taxon>Bacteria</taxon>
        <taxon>Bacillati</taxon>
        <taxon>Bacillota</taxon>
        <taxon>Bacilli</taxon>
        <taxon>Lactobacillales</taxon>
        <taxon>Lactobacillaceae</taxon>
        <taxon>Lactiplantibacillus</taxon>
    </lineage>
</organism>
<sequence>MLMNLQFFSHHKGGGSTANGRDSAGRRLGAKRADGQTVKNGNILYRQRGTHIYPGVNVGRGGDDTLFAMADGVVRFERKGRDKRQVSVYPAK</sequence>
<gene>
    <name evidence="2" type="primary">rpmA</name>
    <name type="ordered locus">lp_1594</name>
</gene>
<feature type="propeptide" id="PRO_0000459902" evidence="1">
    <location>
        <begin position="1"/>
        <end position="8"/>
    </location>
</feature>
<feature type="chain" id="PRO_0000181105" description="Large ribosomal subunit protein bL27">
    <location>
        <begin position="9"/>
        <end position="92"/>
    </location>
</feature>
<feature type="region of interest" description="Disordered" evidence="3">
    <location>
        <begin position="11"/>
        <end position="30"/>
    </location>
</feature>